<accession>Q3B3A7</accession>
<feature type="chain" id="PRO_0000237804" description="2-C-methyl-D-erythritol 4-phosphate cytidylyltransferase">
    <location>
        <begin position="1"/>
        <end position="240"/>
    </location>
</feature>
<feature type="site" description="Transition state stabilizer" evidence="1">
    <location>
        <position position="15"/>
    </location>
</feature>
<feature type="site" description="Transition state stabilizer" evidence="1">
    <location>
        <position position="24"/>
    </location>
</feature>
<feature type="site" description="Positions MEP for the nucleophilic attack" evidence="1">
    <location>
        <position position="164"/>
    </location>
</feature>
<feature type="site" description="Positions MEP for the nucleophilic attack" evidence="1">
    <location>
        <position position="222"/>
    </location>
</feature>
<name>ISPD_CHLL3</name>
<proteinExistence type="inferred from homology"/>
<reference key="1">
    <citation type="submission" date="2005-08" db="EMBL/GenBank/DDBJ databases">
        <title>Complete sequence of Pelodictyon luteolum DSM 273.</title>
        <authorList>
            <consortium name="US DOE Joint Genome Institute"/>
            <person name="Copeland A."/>
            <person name="Lucas S."/>
            <person name="Lapidus A."/>
            <person name="Barry K."/>
            <person name="Detter J.C."/>
            <person name="Glavina T."/>
            <person name="Hammon N."/>
            <person name="Israni S."/>
            <person name="Pitluck S."/>
            <person name="Bryant D."/>
            <person name="Schmutz J."/>
            <person name="Larimer F."/>
            <person name="Land M."/>
            <person name="Kyrpides N."/>
            <person name="Ivanova N."/>
            <person name="Richardson P."/>
        </authorList>
    </citation>
    <scope>NUCLEOTIDE SEQUENCE [LARGE SCALE GENOMIC DNA]</scope>
    <source>
        <strain>DSM 273 / BCRC 81028 / 2530</strain>
    </source>
</reference>
<protein>
    <recommendedName>
        <fullName evidence="1">2-C-methyl-D-erythritol 4-phosphate cytidylyltransferase</fullName>
        <ecNumber evidence="1">2.7.7.60</ecNumber>
    </recommendedName>
    <alternativeName>
        <fullName evidence="1">4-diphosphocytidyl-2C-methyl-D-erythritol synthase</fullName>
    </alternativeName>
    <alternativeName>
        <fullName evidence="1">MEP cytidylyltransferase</fullName>
        <shortName evidence="1">MCT</shortName>
    </alternativeName>
</protein>
<organism>
    <name type="scientific">Chlorobium luteolum (strain DSM 273 / BCRC 81028 / 2530)</name>
    <name type="common">Pelodictyon luteolum</name>
    <dbReference type="NCBI Taxonomy" id="319225"/>
    <lineage>
        <taxon>Bacteria</taxon>
        <taxon>Pseudomonadati</taxon>
        <taxon>Chlorobiota</taxon>
        <taxon>Chlorobiia</taxon>
        <taxon>Chlorobiales</taxon>
        <taxon>Chlorobiaceae</taxon>
        <taxon>Chlorobium/Pelodictyon group</taxon>
        <taxon>Pelodictyon</taxon>
    </lineage>
</organism>
<gene>
    <name evidence="1" type="primary">ispD</name>
    <name type="ordered locus">Plut_1314</name>
</gene>
<evidence type="ECO:0000255" key="1">
    <source>
        <dbReference type="HAMAP-Rule" id="MF_00108"/>
    </source>
</evidence>
<dbReference type="EC" id="2.7.7.60" evidence="1"/>
<dbReference type="EMBL" id="CP000096">
    <property type="protein sequence ID" value="ABB24174.1"/>
    <property type="molecule type" value="Genomic_DNA"/>
</dbReference>
<dbReference type="RefSeq" id="WP_011358046.1">
    <property type="nucleotide sequence ID" value="NC_007512.1"/>
</dbReference>
<dbReference type="SMR" id="Q3B3A7"/>
<dbReference type="STRING" id="319225.Plut_1314"/>
<dbReference type="KEGG" id="plt:Plut_1314"/>
<dbReference type="eggNOG" id="COG1211">
    <property type="taxonomic scope" value="Bacteria"/>
</dbReference>
<dbReference type="HOGENOM" id="CLU_061281_2_2_10"/>
<dbReference type="OrthoDB" id="9806837at2"/>
<dbReference type="UniPathway" id="UPA00056">
    <property type="reaction ID" value="UER00093"/>
</dbReference>
<dbReference type="Proteomes" id="UP000002709">
    <property type="component" value="Chromosome"/>
</dbReference>
<dbReference type="GO" id="GO:0050518">
    <property type="term" value="F:2-C-methyl-D-erythritol 4-phosphate cytidylyltransferase activity"/>
    <property type="evidence" value="ECO:0007669"/>
    <property type="project" value="UniProtKB-UniRule"/>
</dbReference>
<dbReference type="GO" id="GO:0019288">
    <property type="term" value="P:isopentenyl diphosphate biosynthetic process, methylerythritol 4-phosphate pathway"/>
    <property type="evidence" value="ECO:0007669"/>
    <property type="project" value="UniProtKB-UniRule"/>
</dbReference>
<dbReference type="CDD" id="cd02516">
    <property type="entry name" value="CDP-ME_synthetase"/>
    <property type="match status" value="1"/>
</dbReference>
<dbReference type="FunFam" id="3.90.550.10:FF:000003">
    <property type="entry name" value="2-C-methyl-D-erythritol 4-phosphate cytidylyltransferase"/>
    <property type="match status" value="1"/>
</dbReference>
<dbReference type="Gene3D" id="3.90.550.10">
    <property type="entry name" value="Spore Coat Polysaccharide Biosynthesis Protein SpsA, Chain A"/>
    <property type="match status" value="1"/>
</dbReference>
<dbReference type="HAMAP" id="MF_00108">
    <property type="entry name" value="IspD"/>
    <property type="match status" value="1"/>
</dbReference>
<dbReference type="InterPro" id="IPR001228">
    <property type="entry name" value="IspD"/>
</dbReference>
<dbReference type="InterPro" id="IPR034683">
    <property type="entry name" value="IspD/TarI"/>
</dbReference>
<dbReference type="InterPro" id="IPR050088">
    <property type="entry name" value="IspD/TarI_cytidylyltransf_bact"/>
</dbReference>
<dbReference type="InterPro" id="IPR018294">
    <property type="entry name" value="ISPD_synthase_CS"/>
</dbReference>
<dbReference type="InterPro" id="IPR029044">
    <property type="entry name" value="Nucleotide-diphossugar_trans"/>
</dbReference>
<dbReference type="PANTHER" id="PTHR32125">
    <property type="entry name" value="2-C-METHYL-D-ERYTHRITOL 4-PHOSPHATE CYTIDYLYLTRANSFERASE, CHLOROPLASTIC"/>
    <property type="match status" value="1"/>
</dbReference>
<dbReference type="PANTHER" id="PTHR32125:SF4">
    <property type="entry name" value="2-C-METHYL-D-ERYTHRITOL 4-PHOSPHATE CYTIDYLYLTRANSFERASE, CHLOROPLASTIC"/>
    <property type="match status" value="1"/>
</dbReference>
<dbReference type="Pfam" id="PF01128">
    <property type="entry name" value="IspD"/>
    <property type="match status" value="1"/>
</dbReference>
<dbReference type="SUPFAM" id="SSF53448">
    <property type="entry name" value="Nucleotide-diphospho-sugar transferases"/>
    <property type="match status" value="1"/>
</dbReference>
<dbReference type="PROSITE" id="PS01295">
    <property type="entry name" value="ISPD"/>
    <property type="match status" value="1"/>
</dbReference>
<comment type="function">
    <text evidence="1">Catalyzes the formation of 4-diphosphocytidyl-2-C-methyl-D-erythritol from CTP and 2-C-methyl-D-erythritol 4-phosphate (MEP).</text>
</comment>
<comment type="catalytic activity">
    <reaction evidence="1">
        <text>2-C-methyl-D-erythritol 4-phosphate + CTP + H(+) = 4-CDP-2-C-methyl-D-erythritol + diphosphate</text>
        <dbReference type="Rhea" id="RHEA:13429"/>
        <dbReference type="ChEBI" id="CHEBI:15378"/>
        <dbReference type="ChEBI" id="CHEBI:33019"/>
        <dbReference type="ChEBI" id="CHEBI:37563"/>
        <dbReference type="ChEBI" id="CHEBI:57823"/>
        <dbReference type="ChEBI" id="CHEBI:58262"/>
        <dbReference type="EC" id="2.7.7.60"/>
    </reaction>
</comment>
<comment type="pathway">
    <text evidence="1">Isoprenoid biosynthesis; isopentenyl diphosphate biosynthesis via DXP pathway; isopentenyl diphosphate from 1-deoxy-D-xylulose 5-phosphate: step 2/6.</text>
</comment>
<comment type="similarity">
    <text evidence="1">Belongs to the IspD/TarI cytidylyltransferase family. IspD subfamily.</text>
</comment>
<keyword id="KW-0414">Isoprene biosynthesis</keyword>
<keyword id="KW-0548">Nucleotidyltransferase</keyword>
<keyword id="KW-1185">Reference proteome</keyword>
<keyword id="KW-0808">Transferase</keyword>
<sequence length="240" mass="26456">MNAIAIIAASGIGKRMQLPGGRSKQLLEIGGFPVIHHTLKAFEDASQVTEVYIATKADNIDLLQDMARSAGFRKVRHVIEGGKERQDSVWNCIRMISDGHSGAGELPDAILVHDGARPFIRPEEIDDIVRLSVESGACVPGNRPKDTIKYIGSDPSCFGATLERSRLMQVQTPQGFRAGMLIDAHHRAAEEGWYATDDAALVERYFPDYPVRIYETGYHNIKITTPEDIPVAEAIYQALL</sequence>